<organism>
    <name type="scientific">Marinobacter nauticus (strain ATCC 700491 / DSM 11845 / VT8)</name>
    <name type="common">Marinobacter aquaeolei</name>
    <dbReference type="NCBI Taxonomy" id="351348"/>
    <lineage>
        <taxon>Bacteria</taxon>
        <taxon>Pseudomonadati</taxon>
        <taxon>Pseudomonadota</taxon>
        <taxon>Gammaproteobacteria</taxon>
        <taxon>Pseudomonadales</taxon>
        <taxon>Marinobacteraceae</taxon>
        <taxon>Marinobacter</taxon>
    </lineage>
</organism>
<reference key="1">
    <citation type="journal article" date="2011" name="Appl. Environ. Microbiol.">
        <title>Genomic potential of Marinobacter aquaeolei, a biogeochemical 'opportunitroph'.</title>
        <authorList>
            <person name="Singer E."/>
            <person name="Webb E.A."/>
            <person name="Nelson W.C."/>
            <person name="Heidelberg J.F."/>
            <person name="Ivanova N."/>
            <person name="Pati A."/>
            <person name="Edwards K.J."/>
        </authorList>
    </citation>
    <scope>NUCLEOTIDE SEQUENCE [LARGE SCALE GENOMIC DNA]</scope>
    <source>
        <strain>ATCC 700491 / DSM 11845 / VT8</strain>
    </source>
</reference>
<gene>
    <name evidence="1" type="primary">acpP</name>
    <name type="ordered locus">Maqu_1866</name>
</gene>
<accession>A1U1S9</accession>
<protein>
    <recommendedName>
        <fullName evidence="1">Acyl carrier protein</fullName>
        <shortName evidence="1">ACP</shortName>
    </recommendedName>
</protein>
<sequence length="77" mass="8561">MSTVEERVKKIVCEQLGVKESEVQNTSSFVEDLGADSLDTVELVMALEEEFETEIPDEEAEKLGTVQDAIDYIVAHT</sequence>
<keyword id="KW-0963">Cytoplasm</keyword>
<keyword id="KW-0275">Fatty acid biosynthesis</keyword>
<keyword id="KW-0276">Fatty acid metabolism</keyword>
<keyword id="KW-0444">Lipid biosynthesis</keyword>
<keyword id="KW-0443">Lipid metabolism</keyword>
<keyword id="KW-0596">Phosphopantetheine</keyword>
<keyword id="KW-0597">Phosphoprotein</keyword>
<proteinExistence type="inferred from homology"/>
<feature type="chain" id="PRO_1000066636" description="Acyl carrier protein">
    <location>
        <begin position="1"/>
        <end position="77"/>
    </location>
</feature>
<feature type="domain" description="Carrier" evidence="2">
    <location>
        <begin position="2"/>
        <end position="77"/>
    </location>
</feature>
<feature type="modified residue" description="O-(pantetheine 4'-phosphoryl)serine" evidence="2">
    <location>
        <position position="37"/>
    </location>
</feature>
<dbReference type="EMBL" id="CP000514">
    <property type="protein sequence ID" value="ABM18948.1"/>
    <property type="molecule type" value="Genomic_DNA"/>
</dbReference>
<dbReference type="RefSeq" id="WP_008938713.1">
    <property type="nucleotide sequence ID" value="NC_008740.1"/>
</dbReference>
<dbReference type="SMR" id="A1U1S9"/>
<dbReference type="STRING" id="351348.Maqu_1866"/>
<dbReference type="GeneID" id="94723385"/>
<dbReference type="KEGG" id="maq:Maqu_1866"/>
<dbReference type="eggNOG" id="COG0236">
    <property type="taxonomic scope" value="Bacteria"/>
</dbReference>
<dbReference type="HOGENOM" id="CLU_108696_5_1_6"/>
<dbReference type="OrthoDB" id="9804551at2"/>
<dbReference type="UniPathway" id="UPA00094"/>
<dbReference type="Proteomes" id="UP000000998">
    <property type="component" value="Chromosome"/>
</dbReference>
<dbReference type="GO" id="GO:0005829">
    <property type="term" value="C:cytosol"/>
    <property type="evidence" value="ECO:0007669"/>
    <property type="project" value="TreeGrafter"/>
</dbReference>
<dbReference type="GO" id="GO:0016020">
    <property type="term" value="C:membrane"/>
    <property type="evidence" value="ECO:0007669"/>
    <property type="project" value="GOC"/>
</dbReference>
<dbReference type="GO" id="GO:0000035">
    <property type="term" value="F:acyl binding"/>
    <property type="evidence" value="ECO:0007669"/>
    <property type="project" value="TreeGrafter"/>
</dbReference>
<dbReference type="GO" id="GO:0000036">
    <property type="term" value="F:acyl carrier activity"/>
    <property type="evidence" value="ECO:0007669"/>
    <property type="project" value="UniProtKB-UniRule"/>
</dbReference>
<dbReference type="GO" id="GO:0009245">
    <property type="term" value="P:lipid A biosynthetic process"/>
    <property type="evidence" value="ECO:0007669"/>
    <property type="project" value="TreeGrafter"/>
</dbReference>
<dbReference type="FunFam" id="1.10.1200.10:FF:000001">
    <property type="entry name" value="Acyl carrier protein"/>
    <property type="match status" value="1"/>
</dbReference>
<dbReference type="Gene3D" id="1.10.1200.10">
    <property type="entry name" value="ACP-like"/>
    <property type="match status" value="1"/>
</dbReference>
<dbReference type="HAMAP" id="MF_01217">
    <property type="entry name" value="Acyl_carrier"/>
    <property type="match status" value="1"/>
</dbReference>
<dbReference type="InterPro" id="IPR003231">
    <property type="entry name" value="ACP"/>
</dbReference>
<dbReference type="InterPro" id="IPR036736">
    <property type="entry name" value="ACP-like_sf"/>
</dbReference>
<dbReference type="InterPro" id="IPR009081">
    <property type="entry name" value="PP-bd_ACP"/>
</dbReference>
<dbReference type="InterPro" id="IPR006162">
    <property type="entry name" value="Ppantetheine_attach_site"/>
</dbReference>
<dbReference type="NCBIfam" id="TIGR00517">
    <property type="entry name" value="acyl_carrier"/>
    <property type="match status" value="1"/>
</dbReference>
<dbReference type="NCBIfam" id="NF002148">
    <property type="entry name" value="PRK00982.1-2"/>
    <property type="match status" value="1"/>
</dbReference>
<dbReference type="NCBIfam" id="NF002149">
    <property type="entry name" value="PRK00982.1-3"/>
    <property type="match status" value="1"/>
</dbReference>
<dbReference type="NCBIfam" id="NF002150">
    <property type="entry name" value="PRK00982.1-4"/>
    <property type="match status" value="1"/>
</dbReference>
<dbReference type="NCBIfam" id="NF002151">
    <property type="entry name" value="PRK00982.1-5"/>
    <property type="match status" value="1"/>
</dbReference>
<dbReference type="PANTHER" id="PTHR20863">
    <property type="entry name" value="ACYL CARRIER PROTEIN"/>
    <property type="match status" value="1"/>
</dbReference>
<dbReference type="PANTHER" id="PTHR20863:SF76">
    <property type="entry name" value="CARRIER DOMAIN-CONTAINING PROTEIN"/>
    <property type="match status" value="1"/>
</dbReference>
<dbReference type="Pfam" id="PF00550">
    <property type="entry name" value="PP-binding"/>
    <property type="match status" value="1"/>
</dbReference>
<dbReference type="SUPFAM" id="SSF47336">
    <property type="entry name" value="ACP-like"/>
    <property type="match status" value="1"/>
</dbReference>
<dbReference type="PROSITE" id="PS50075">
    <property type="entry name" value="CARRIER"/>
    <property type="match status" value="1"/>
</dbReference>
<dbReference type="PROSITE" id="PS00012">
    <property type="entry name" value="PHOSPHOPANTETHEINE"/>
    <property type="match status" value="1"/>
</dbReference>
<evidence type="ECO:0000255" key="1">
    <source>
        <dbReference type="HAMAP-Rule" id="MF_01217"/>
    </source>
</evidence>
<evidence type="ECO:0000255" key="2">
    <source>
        <dbReference type="PROSITE-ProRule" id="PRU00258"/>
    </source>
</evidence>
<name>ACP_MARN8</name>
<comment type="function">
    <text evidence="1">Carrier of the growing fatty acid chain in fatty acid biosynthesis.</text>
</comment>
<comment type="pathway">
    <text evidence="1">Lipid metabolism; fatty acid biosynthesis.</text>
</comment>
<comment type="subcellular location">
    <subcellularLocation>
        <location evidence="1">Cytoplasm</location>
    </subcellularLocation>
</comment>
<comment type="PTM">
    <text evidence="1">4'-phosphopantetheine is transferred from CoA to a specific serine of apo-ACP by AcpS. This modification is essential for activity because fatty acids are bound in thioester linkage to the sulfhydryl of the prosthetic group.</text>
</comment>
<comment type="similarity">
    <text evidence="1">Belongs to the acyl carrier protein (ACP) family.</text>
</comment>